<keyword id="KW-0025">Alternative splicing</keyword>
<keyword id="KW-0965">Cell junction</keyword>
<keyword id="KW-1003">Cell membrane</keyword>
<keyword id="KW-0256">Endoplasmic reticulum</keyword>
<keyword id="KW-0472">Membrane</keyword>
<keyword id="KW-1185">Reference proteome</keyword>
<keyword id="KW-0677">Repeat</keyword>
<keyword id="KW-0728">SH3 domain</keyword>
<gene>
    <name type="primary">dlg1</name>
</gene>
<protein>
    <recommendedName>
        <fullName>Disks large homolog 1</fullName>
    </recommendedName>
    <alternativeName>
        <fullName>Synapse-associated protein 97A</fullName>
        <shortName>SAP-97A</shortName>
        <shortName>SAP97A</shortName>
    </alternativeName>
</protein>
<reference key="1">
    <citation type="journal article" date="2005" name="J. Neurobiol.">
        <title>Characterization of zebrafish PSD-95 gene family members.</title>
        <authorList>
            <person name="Meyer M.P."/>
            <person name="Trimmer J.S."/>
            <person name="Gilthorpe J.D."/>
            <person name="Smith S.J."/>
        </authorList>
    </citation>
    <scope>NUCLEOTIDE SEQUENCE [MRNA] (ISOFORM 2)</scope>
    <scope>FUNCTION</scope>
    <scope>DEVELOPMENTAL STAGE</scope>
</reference>
<reference key="2">
    <citation type="submission" date="2003-03" db="EMBL/GenBank/DDBJ databases">
        <authorList>
            <consortium name="NIH - Zebrafish Gene Collection (ZGC) project"/>
        </authorList>
    </citation>
    <scope>NUCLEOTIDE SEQUENCE [LARGE SCALE MRNA] (ISOFORM 1)</scope>
    <source>
        <strain>AB</strain>
    </source>
</reference>
<comment type="function">
    <text evidence="1 4 10">Essential multidomain scaffolding protein required for normal development (By similarity). Recruits channels, receptors and signaling molecules to discrete plasma membrane domains in polarized cells. Promotes epithelial cell layer barrier function via maintaining cell-cell adhesion (By similarity). May play a role in adherens junction assembly, signal transduction and cell proliferation. May play a role in synapse assembly and function (Ref.2).</text>
</comment>
<comment type="subcellular location">
    <subcellularLocation>
        <location evidence="2">Cell membrane</location>
        <topology evidence="2">Peripheral membrane protein</topology>
    </subcellularLocation>
    <subcellularLocation>
        <location evidence="3">Endoplasmic reticulum membrane</location>
    </subcellularLocation>
    <subcellularLocation>
        <location evidence="2">Cell junction</location>
    </subcellularLocation>
    <subcellularLocation>
        <location evidence="2">Apical cell membrane</location>
    </subcellularLocation>
</comment>
<comment type="alternative products">
    <event type="alternative splicing"/>
    <isoform>
        <id>Q5PYH6-1</id>
        <name>1</name>
        <sequence type="displayed"/>
    </isoform>
    <isoform>
        <id>Q5PYH6-2</id>
        <name>2</name>
        <sequence type="described" ref="VSP_014168 VSP_014169 VSP_014170 VSP_014171"/>
    </isoform>
    <text>A number of isoforms are produced.</text>
</comment>
<comment type="developmental stage">
    <text evidence="9">At 4 days-post-fertilization (dpf), expressed in the inner and outer plexiform layers and the ganglion cell layer of the retina, the marginal zone of the tegmentum, and in the developing craniofacial cartilage.</text>
</comment>
<comment type="similarity">
    <text evidence="12">Belongs to the MAGUK family.</text>
</comment>
<organism>
    <name type="scientific">Danio rerio</name>
    <name type="common">Zebrafish</name>
    <name type="synonym">Brachydanio rerio</name>
    <dbReference type="NCBI Taxonomy" id="7955"/>
    <lineage>
        <taxon>Eukaryota</taxon>
        <taxon>Metazoa</taxon>
        <taxon>Chordata</taxon>
        <taxon>Craniata</taxon>
        <taxon>Vertebrata</taxon>
        <taxon>Euteleostomi</taxon>
        <taxon>Actinopterygii</taxon>
        <taxon>Neopterygii</taxon>
        <taxon>Teleostei</taxon>
        <taxon>Ostariophysi</taxon>
        <taxon>Cypriniformes</taxon>
        <taxon>Danionidae</taxon>
        <taxon>Danioninae</taxon>
        <taxon>Danio</taxon>
    </lineage>
</organism>
<sequence length="873" mass="96981">MPVRQKDAQRALQLLEEYQTKLSQTGDPHLRLSIERVINIFKSTLFQALVDIQEYYEVSLQDTEDKPIEDSSLKSRESFPPVNEWNLSVPPSTTGPTEPVPINLPQTEEKYRYQDEDTTSPPEHSSPHIPGDARPPELVQVSEKNISQIENVHGYVSHSHISPMKQADVIPPPSAPIIPVIPISPVPAETTAIIPAPASQASPAPVVVNTESLDSSPYVNGTEADYEYEEITLERGNSGLGFSIAGGTDNPHIGEDPSIFITKIIPGGAAAQDGRLRVNDCILRVNDVDVRDVTHSNAVEALKEAGCIVRLYVRRRKPLSEKIMDVKLVKGPKGLGFSIAGGVGNQHIPGDNSIYITKIIEGGAAHKDGRLQIGDKLLAVNAVCLEEVTHEDAVAALKNTPDVVYLKVAKPTSVFMNDSYAPPDVTSSYSQHMENHISTQSYLSQPLTPATPSRYSPVSKGMLGDDEITREPRKIVLHRGTTGLGFNIVGGEDGEGIFISFILAGGPADLCGELRKGDRIVSVNGVDLRSATHEQAAAALKNAGQTVTIIAQYRPEEYSRFEAKIHDLREQMMNSSISSGSGSLRTSQKRTLYVRALFDYDITKTVKFNSKSRDKASLNDKRRKTLFSRKFLFSKNKDSGEQDTSDVDQHVTSNASDSESSFRGQEDYVLSYETVTQQEVSYSRPVIILGPMKDRINDDLISEFPDKFGSCVPHTTRPKRDYEVDGRDYHFVNSREQMEKDIQDHKFIEAGQYNNHLYGTSVQSVREVAEKGKHCILDVSGNAIKRLQLAQLYPIAVFIKPKSVENILEMNKRLMEEQGRKTYDRAMKLEQEFLEHFTAIVQGDTLEEIYNQVKQIIEEQSGPFIWVPVKEKL</sequence>
<accession>Q5PYH6</accession>
<accession>Q7ZUM2</accession>
<name>DLG1_DANRE</name>
<evidence type="ECO:0000250" key="1">
    <source>
        <dbReference type="UniProtKB" id="A0A8C0TYJ0"/>
    </source>
</evidence>
<evidence type="ECO:0000250" key="2">
    <source>
        <dbReference type="UniProtKB" id="Q12959"/>
    </source>
</evidence>
<evidence type="ECO:0000250" key="3">
    <source>
        <dbReference type="UniProtKB" id="Q62696"/>
    </source>
</evidence>
<evidence type="ECO:0000250" key="4">
    <source>
        <dbReference type="UniProtKB" id="Q811D0"/>
    </source>
</evidence>
<evidence type="ECO:0000255" key="5">
    <source>
        <dbReference type="PROSITE-ProRule" id="PRU00100"/>
    </source>
</evidence>
<evidence type="ECO:0000255" key="6">
    <source>
        <dbReference type="PROSITE-ProRule" id="PRU00143"/>
    </source>
</evidence>
<evidence type="ECO:0000255" key="7">
    <source>
        <dbReference type="PROSITE-ProRule" id="PRU00365"/>
    </source>
</evidence>
<evidence type="ECO:0000256" key="8">
    <source>
        <dbReference type="SAM" id="MobiDB-lite"/>
    </source>
</evidence>
<evidence type="ECO:0000269" key="9">
    <source>
    </source>
</evidence>
<evidence type="ECO:0000269" key="10">
    <source ref="2"/>
</evidence>
<evidence type="ECO:0000303" key="11">
    <source>
    </source>
</evidence>
<evidence type="ECO:0000305" key="12"/>
<dbReference type="EMBL" id="AY819034">
    <property type="protein sequence ID" value="AAV68499.1"/>
    <property type="molecule type" value="mRNA"/>
</dbReference>
<dbReference type="EMBL" id="BC048066">
    <property type="protein sequence ID" value="AAH48066.1"/>
    <property type="molecule type" value="mRNA"/>
</dbReference>
<dbReference type="RefSeq" id="NP_955820.1">
    <molecule id="Q5PYH6-1"/>
    <property type="nucleotide sequence ID" value="NM_199526.1"/>
</dbReference>
<dbReference type="SMR" id="Q5PYH6"/>
<dbReference type="FunCoup" id="Q5PYH6">
    <property type="interactions" value="1887"/>
</dbReference>
<dbReference type="STRING" id="7955.ENSDARP00000036537"/>
<dbReference type="PaxDb" id="7955-ENSDARP00000036537"/>
<dbReference type="ABCD" id="Q5PYH6">
    <property type="antibodies" value="1 sequenced antibody"/>
</dbReference>
<dbReference type="GeneID" id="114446"/>
<dbReference type="KEGG" id="dre:114446"/>
<dbReference type="AGR" id="ZFIN:ZDB-GENE-010724-8"/>
<dbReference type="CTD" id="114446"/>
<dbReference type="ZFIN" id="ZDB-GENE-010724-8">
    <property type="gene designation" value="dlg1a"/>
</dbReference>
<dbReference type="eggNOG" id="KOG0708">
    <property type="taxonomic scope" value="Eukaryota"/>
</dbReference>
<dbReference type="InParanoid" id="Q5PYH6"/>
<dbReference type="OrthoDB" id="78824at2759"/>
<dbReference type="PhylomeDB" id="Q5PYH6"/>
<dbReference type="PRO" id="PR:Q5PYH6"/>
<dbReference type="Proteomes" id="UP000000437">
    <property type="component" value="Alternate scaffold 6"/>
</dbReference>
<dbReference type="Proteomes" id="UP000000437">
    <property type="component" value="Chromosome 6"/>
</dbReference>
<dbReference type="GO" id="GO:0070161">
    <property type="term" value="C:anchoring junction"/>
    <property type="evidence" value="ECO:0007669"/>
    <property type="project" value="UniProtKB-SubCell"/>
</dbReference>
<dbReference type="GO" id="GO:0016324">
    <property type="term" value="C:apical plasma membrane"/>
    <property type="evidence" value="ECO:0007669"/>
    <property type="project" value="UniProtKB-SubCell"/>
</dbReference>
<dbReference type="GO" id="GO:0016323">
    <property type="term" value="C:basolateral plasma membrane"/>
    <property type="evidence" value="ECO:0000250"/>
    <property type="project" value="UniProtKB"/>
</dbReference>
<dbReference type="GO" id="GO:0005789">
    <property type="term" value="C:endoplasmic reticulum membrane"/>
    <property type="evidence" value="ECO:0007669"/>
    <property type="project" value="UniProtKB-SubCell"/>
</dbReference>
<dbReference type="GO" id="GO:0031594">
    <property type="term" value="C:neuromuscular junction"/>
    <property type="evidence" value="ECO:0000318"/>
    <property type="project" value="GO_Central"/>
</dbReference>
<dbReference type="GO" id="GO:0043005">
    <property type="term" value="C:neuron projection"/>
    <property type="evidence" value="ECO:0000318"/>
    <property type="project" value="GO_Central"/>
</dbReference>
<dbReference type="GO" id="GO:0098839">
    <property type="term" value="C:postsynaptic density membrane"/>
    <property type="evidence" value="ECO:0000318"/>
    <property type="project" value="GO_Central"/>
</dbReference>
<dbReference type="GO" id="GO:0035255">
    <property type="term" value="F:ionotropic glutamate receptor binding"/>
    <property type="evidence" value="ECO:0000318"/>
    <property type="project" value="GO_Central"/>
</dbReference>
<dbReference type="GO" id="GO:0019902">
    <property type="term" value="F:phosphatase binding"/>
    <property type="evidence" value="ECO:0000250"/>
    <property type="project" value="UniProtKB"/>
</dbReference>
<dbReference type="GO" id="GO:0019901">
    <property type="term" value="F:protein kinase binding"/>
    <property type="evidence" value="ECO:0000318"/>
    <property type="project" value="GO_Central"/>
</dbReference>
<dbReference type="GO" id="GO:0007015">
    <property type="term" value="P:actin filament organization"/>
    <property type="evidence" value="ECO:0000250"/>
    <property type="project" value="UniProtKB"/>
</dbReference>
<dbReference type="GO" id="GO:0098609">
    <property type="term" value="P:cell-cell adhesion"/>
    <property type="evidence" value="ECO:0000250"/>
    <property type="project" value="UniProtKB"/>
</dbReference>
<dbReference type="GO" id="GO:0007268">
    <property type="term" value="P:chemical synaptic transmission"/>
    <property type="evidence" value="ECO:0000318"/>
    <property type="project" value="GO_Central"/>
</dbReference>
<dbReference type="GO" id="GO:0030866">
    <property type="term" value="P:cortical actin cytoskeleton organization"/>
    <property type="evidence" value="ECO:0000250"/>
    <property type="project" value="UniProtKB"/>
</dbReference>
<dbReference type="GO" id="GO:0001935">
    <property type="term" value="P:endothelial cell proliferation"/>
    <property type="evidence" value="ECO:0000250"/>
    <property type="project" value="UniProtKB"/>
</dbReference>
<dbReference type="GO" id="GO:0010669">
    <property type="term" value="P:epithelial structure maintenance"/>
    <property type="evidence" value="ECO:0000250"/>
    <property type="project" value="UniProtKB"/>
</dbReference>
<dbReference type="GO" id="GO:0045197">
    <property type="term" value="P:establishment or maintenance of epithelial cell apical/basal polarity"/>
    <property type="evidence" value="ECO:0000318"/>
    <property type="project" value="GO_Central"/>
</dbReference>
<dbReference type="GO" id="GO:2000134">
    <property type="term" value="P:negative regulation of G1/S transition of mitotic cell cycle"/>
    <property type="evidence" value="ECO:0000250"/>
    <property type="project" value="UniProtKB"/>
</dbReference>
<dbReference type="GO" id="GO:0007399">
    <property type="term" value="P:nervous system development"/>
    <property type="evidence" value="ECO:0000318"/>
    <property type="project" value="GO_Central"/>
</dbReference>
<dbReference type="GO" id="GO:0035418">
    <property type="term" value="P:protein localization to synapse"/>
    <property type="evidence" value="ECO:0000318"/>
    <property type="project" value="GO_Central"/>
</dbReference>
<dbReference type="GO" id="GO:0043113">
    <property type="term" value="P:receptor clustering"/>
    <property type="evidence" value="ECO:0000318"/>
    <property type="project" value="GO_Central"/>
</dbReference>
<dbReference type="GO" id="GO:0097120">
    <property type="term" value="P:receptor localization to synapse"/>
    <property type="evidence" value="ECO:0000318"/>
    <property type="project" value="GO_Central"/>
</dbReference>
<dbReference type="GO" id="GO:0099072">
    <property type="term" value="P:regulation of postsynaptic membrane neurotransmitter receptor levels"/>
    <property type="evidence" value="ECO:0000318"/>
    <property type="project" value="GO_Central"/>
</dbReference>
<dbReference type="GO" id="GO:0050808">
    <property type="term" value="P:synapse organization"/>
    <property type="evidence" value="ECO:0000303"/>
    <property type="project" value="UniProtKB"/>
</dbReference>
<dbReference type="CDD" id="cd00071">
    <property type="entry name" value="GMPK"/>
    <property type="match status" value="1"/>
</dbReference>
<dbReference type="CDD" id="cd06723">
    <property type="entry name" value="PDZ1_Dlg1-2-4-like"/>
    <property type="match status" value="1"/>
</dbReference>
<dbReference type="CDD" id="cd06724">
    <property type="entry name" value="PDZ2_Dlg1-2-4-like"/>
    <property type="match status" value="1"/>
</dbReference>
<dbReference type="CDD" id="cd06795">
    <property type="entry name" value="PDZ3_Dlg1-2-4-like"/>
    <property type="match status" value="1"/>
</dbReference>
<dbReference type="FunFam" id="3.40.50.300:FF:001402">
    <property type="entry name" value="Discs, large homolog 3 (Drosophila)"/>
    <property type="match status" value="1"/>
</dbReference>
<dbReference type="FunFam" id="1.10.287.470:FF:000001">
    <property type="entry name" value="Disks large 1 isoform X3"/>
    <property type="match status" value="1"/>
</dbReference>
<dbReference type="FunFam" id="2.30.30.40:FF:000008">
    <property type="entry name" value="Disks large homolog 1 isoform 2"/>
    <property type="match status" value="1"/>
</dbReference>
<dbReference type="FunFam" id="2.30.42.10:FF:000001">
    <property type="entry name" value="Disks large homolog 1 isoform 2"/>
    <property type="match status" value="1"/>
</dbReference>
<dbReference type="FunFam" id="3.30.63.10:FF:000001">
    <property type="entry name" value="Disks large homolog 1 isoform 2"/>
    <property type="match status" value="1"/>
</dbReference>
<dbReference type="FunFam" id="2.30.42.10:FF:000049">
    <property type="entry name" value="disks large homolog 1 isoform X1"/>
    <property type="match status" value="1"/>
</dbReference>
<dbReference type="FunFam" id="2.30.42.10:FF:000002">
    <property type="entry name" value="Disks large homolog 4 isoform 2"/>
    <property type="match status" value="1"/>
</dbReference>
<dbReference type="Gene3D" id="2.30.42.10">
    <property type="match status" value="3"/>
</dbReference>
<dbReference type="Gene3D" id="3.30.63.10">
    <property type="entry name" value="Guanylate Kinase phosphate binding domain"/>
    <property type="match status" value="1"/>
</dbReference>
<dbReference type="Gene3D" id="1.10.287.470">
    <property type="entry name" value="Helix hairpin bin"/>
    <property type="match status" value="1"/>
</dbReference>
<dbReference type="Gene3D" id="3.40.50.300">
    <property type="entry name" value="P-loop containing nucleotide triphosphate hydrolases"/>
    <property type="match status" value="1"/>
</dbReference>
<dbReference type="Gene3D" id="2.30.30.40">
    <property type="entry name" value="SH3 Domains"/>
    <property type="match status" value="1"/>
</dbReference>
<dbReference type="InterPro" id="IPR019583">
    <property type="entry name" value="DLG1-4_PDZ_assoc"/>
</dbReference>
<dbReference type="InterPro" id="IPR016313">
    <property type="entry name" value="DLG1-like"/>
</dbReference>
<dbReference type="InterPro" id="IPR019590">
    <property type="entry name" value="DLG1_PEST_dom"/>
</dbReference>
<dbReference type="InterPro" id="IPR008145">
    <property type="entry name" value="GK/Ca_channel_bsu"/>
</dbReference>
<dbReference type="InterPro" id="IPR008144">
    <property type="entry name" value="Guanylate_kin-like_dom"/>
</dbReference>
<dbReference type="InterPro" id="IPR020590">
    <property type="entry name" value="Guanylate_kinase_CS"/>
</dbReference>
<dbReference type="InterPro" id="IPR015143">
    <property type="entry name" value="L27_1"/>
</dbReference>
<dbReference type="InterPro" id="IPR004172">
    <property type="entry name" value="L27_dom"/>
</dbReference>
<dbReference type="InterPro" id="IPR036892">
    <property type="entry name" value="L27_dom_sf"/>
</dbReference>
<dbReference type="InterPro" id="IPR027417">
    <property type="entry name" value="P-loop_NTPase"/>
</dbReference>
<dbReference type="InterPro" id="IPR001478">
    <property type="entry name" value="PDZ"/>
</dbReference>
<dbReference type="InterPro" id="IPR036034">
    <property type="entry name" value="PDZ_sf"/>
</dbReference>
<dbReference type="InterPro" id="IPR050614">
    <property type="entry name" value="Synaptic_Scaffolding_LAP-MAGUK"/>
</dbReference>
<dbReference type="PANTHER" id="PTHR23119">
    <property type="entry name" value="DISCS LARGE"/>
    <property type="match status" value="1"/>
</dbReference>
<dbReference type="PANTHER" id="PTHR23119:SF5">
    <property type="entry name" value="DISKS LARGE HOMOLOG 1"/>
    <property type="match status" value="1"/>
</dbReference>
<dbReference type="Pfam" id="PF00625">
    <property type="entry name" value="Guanylate_kin"/>
    <property type="match status" value="1"/>
</dbReference>
<dbReference type="Pfam" id="PF09058">
    <property type="entry name" value="L27_1"/>
    <property type="match status" value="1"/>
</dbReference>
<dbReference type="Pfam" id="PF10608">
    <property type="entry name" value="MAGUK_N_PEST"/>
    <property type="match status" value="1"/>
</dbReference>
<dbReference type="Pfam" id="PF00595">
    <property type="entry name" value="PDZ"/>
    <property type="match status" value="3"/>
</dbReference>
<dbReference type="Pfam" id="PF10600">
    <property type="entry name" value="PDZ_assoc"/>
    <property type="match status" value="1"/>
</dbReference>
<dbReference type="PIRSF" id="PIRSF001741">
    <property type="entry name" value="MAGUK_DLGH"/>
    <property type="match status" value="1"/>
</dbReference>
<dbReference type="SMART" id="SM00072">
    <property type="entry name" value="GuKc"/>
    <property type="match status" value="1"/>
</dbReference>
<dbReference type="SMART" id="SM00569">
    <property type="entry name" value="L27"/>
    <property type="match status" value="1"/>
</dbReference>
<dbReference type="SMART" id="SM01277">
    <property type="entry name" value="MAGUK_N_PEST"/>
    <property type="match status" value="1"/>
</dbReference>
<dbReference type="SMART" id="SM00228">
    <property type="entry name" value="PDZ"/>
    <property type="match status" value="3"/>
</dbReference>
<dbReference type="SUPFAM" id="SSF101288">
    <property type="entry name" value="L27 domain"/>
    <property type="match status" value="1"/>
</dbReference>
<dbReference type="SUPFAM" id="SSF52540">
    <property type="entry name" value="P-loop containing nucleoside triphosphate hydrolases"/>
    <property type="match status" value="1"/>
</dbReference>
<dbReference type="SUPFAM" id="SSF50156">
    <property type="entry name" value="PDZ domain-like"/>
    <property type="match status" value="3"/>
</dbReference>
<dbReference type="PROSITE" id="PS00856">
    <property type="entry name" value="GUANYLATE_KINASE_1"/>
    <property type="match status" value="1"/>
</dbReference>
<dbReference type="PROSITE" id="PS50052">
    <property type="entry name" value="GUANYLATE_KINASE_2"/>
    <property type="match status" value="1"/>
</dbReference>
<dbReference type="PROSITE" id="PS51022">
    <property type="entry name" value="L27"/>
    <property type="match status" value="1"/>
</dbReference>
<dbReference type="PROSITE" id="PS50106">
    <property type="entry name" value="PDZ"/>
    <property type="match status" value="3"/>
</dbReference>
<proteinExistence type="evidence at transcript level"/>
<feature type="chain" id="PRO_0000094551" description="Disks large homolog 1">
    <location>
        <begin position="1"/>
        <end position="873"/>
    </location>
</feature>
<feature type="domain" description="L27" evidence="7">
    <location>
        <begin position="4"/>
        <end position="64"/>
    </location>
</feature>
<feature type="domain" description="PDZ 1" evidence="6">
    <location>
        <begin position="230"/>
        <end position="317"/>
    </location>
</feature>
<feature type="domain" description="PDZ 2" evidence="6">
    <location>
        <begin position="325"/>
        <end position="412"/>
    </location>
</feature>
<feature type="domain" description="PDZ 3" evidence="6">
    <location>
        <begin position="474"/>
        <end position="555"/>
    </location>
</feature>
<feature type="domain" description="Guanylate kinase-like" evidence="5">
    <location>
        <begin position="683"/>
        <end position="858"/>
    </location>
</feature>
<feature type="region of interest" description="Disordered" evidence="8">
    <location>
        <begin position="62"/>
        <end position="135"/>
    </location>
</feature>
<feature type="region of interest" description="Disordered" evidence="8">
    <location>
        <begin position="441"/>
        <end position="464"/>
    </location>
</feature>
<feature type="region of interest" description="Disordered" evidence="8">
    <location>
        <begin position="636"/>
        <end position="662"/>
    </location>
</feature>
<feature type="compositionally biased region" description="Basic and acidic residues" evidence="8">
    <location>
        <begin position="63"/>
        <end position="77"/>
    </location>
</feature>
<feature type="compositionally biased region" description="Polar residues" evidence="8">
    <location>
        <begin position="85"/>
        <end position="96"/>
    </location>
</feature>
<feature type="compositionally biased region" description="Polar residues" evidence="8">
    <location>
        <begin position="441"/>
        <end position="456"/>
    </location>
</feature>
<feature type="compositionally biased region" description="Polar residues" evidence="8">
    <location>
        <begin position="650"/>
        <end position="662"/>
    </location>
</feature>
<feature type="splice variant" id="VSP_014168" description="In isoform 2." evidence="11">
    <location>
        <begin position="1"/>
        <end position="100"/>
    </location>
</feature>
<feature type="splice variant" id="VSP_014169" description="In isoform 2." evidence="11">
    <original>PINLPQTEE</original>
    <variation>MEDSDQGFN</variation>
    <location>
        <begin position="101"/>
        <end position="109"/>
    </location>
</feature>
<feature type="splice variant" id="VSP_014170" description="In isoform 2." evidence="11">
    <location>
        <begin position="166"/>
        <end position="200"/>
    </location>
</feature>
<feature type="splice variant" id="VSP_014171" description="In isoform 2." evidence="11">
    <original>TVKFNSKSRDKASLNDKRRKTLFSRKFLFSKNKDSGEQDTSDVDQHVTSNASDSESSFR</original>
    <variation>DSGLPSQGLNFRFGDILHVLNASDEEWWQARHVTTDGEMEEMGVIPSKKRVERKERARLKTVKFNSKSRDKADLSDDKGLS</variation>
    <location>
        <begin position="605"/>
        <end position="663"/>
    </location>
</feature>